<keyword id="KW-0325">Glycoprotein</keyword>
<keyword id="KW-0472">Membrane</keyword>
<keyword id="KW-1185">Reference proteome</keyword>
<keyword id="KW-0812">Transmembrane</keyword>
<keyword id="KW-1133">Transmembrane helix</keyword>
<organism>
    <name type="scientific">Arabidopsis thaliana</name>
    <name type="common">Mouse-ear cress</name>
    <dbReference type="NCBI Taxonomy" id="3702"/>
    <lineage>
        <taxon>Eukaryota</taxon>
        <taxon>Viridiplantae</taxon>
        <taxon>Streptophyta</taxon>
        <taxon>Embryophyta</taxon>
        <taxon>Tracheophyta</taxon>
        <taxon>Spermatophyta</taxon>
        <taxon>Magnoliopsida</taxon>
        <taxon>eudicotyledons</taxon>
        <taxon>Gunneridae</taxon>
        <taxon>Pentapetalae</taxon>
        <taxon>rosids</taxon>
        <taxon>malvids</taxon>
        <taxon>Brassicales</taxon>
        <taxon>Brassicaceae</taxon>
        <taxon>Camelineae</taxon>
        <taxon>Arabidopsis</taxon>
    </lineage>
</organism>
<protein>
    <recommendedName>
        <fullName>Tetraspanin-16</fullName>
    </recommendedName>
</protein>
<sequence>MSEIRTGFLTMATIILICIGLTMTGTGLYYRKTVSKCIRETDGSFVVIGLLLLVIPQFALYAICCHSKRMFTIYIYAMIFVSIVLGGYSLKCFIYNTTFGIAKNPAEEKRTAKQLVGRLVPESKLAKVTECIIHNHDCNFNASQNSNVWRYCCAQPRGCGVTTMFGQPGEWSWKHQHVENHVPEECSYEYCLSCRGCQMSILKAIVHQWKYLSMFSYPALFLVCLSLAISRSIMDTFDEPDDYRGYYS</sequence>
<evidence type="ECO:0000250" key="1"/>
<evidence type="ECO:0000255" key="2"/>
<evidence type="ECO:0000305" key="3"/>
<feature type="chain" id="PRO_0000421056" description="Tetraspanin-16">
    <location>
        <begin position="1"/>
        <end position="248"/>
    </location>
</feature>
<feature type="topological domain" description="Cytoplasmic" evidence="2">
    <location>
        <begin position="1"/>
        <end position="7"/>
    </location>
</feature>
<feature type="transmembrane region" description="Helical" evidence="2">
    <location>
        <begin position="8"/>
        <end position="28"/>
    </location>
</feature>
<feature type="topological domain" description="Extracellular" evidence="2">
    <location>
        <begin position="29"/>
        <end position="44"/>
    </location>
</feature>
<feature type="transmembrane region" description="Helical" evidence="2">
    <location>
        <begin position="45"/>
        <end position="65"/>
    </location>
</feature>
<feature type="topological domain" description="Cytoplasmic" evidence="2">
    <location>
        <begin position="66"/>
        <end position="69"/>
    </location>
</feature>
<feature type="transmembrane region" description="Helical" evidence="2">
    <location>
        <begin position="70"/>
        <end position="90"/>
    </location>
</feature>
<feature type="topological domain" description="Extracellular" evidence="2">
    <location>
        <begin position="91"/>
        <end position="208"/>
    </location>
</feature>
<feature type="transmembrane region" description="Helical" evidence="2">
    <location>
        <begin position="209"/>
        <end position="229"/>
    </location>
</feature>
<feature type="topological domain" description="Cytoplasmic" evidence="2">
    <location>
        <begin position="230"/>
        <end position="248"/>
    </location>
</feature>
<feature type="glycosylation site" description="N-linked (GlcNAc...) asparagine" evidence="2">
    <location>
        <position position="96"/>
    </location>
</feature>
<feature type="glycosylation site" description="N-linked (GlcNAc...) asparagine" evidence="2">
    <location>
        <position position="141"/>
    </location>
</feature>
<feature type="sequence conflict" description="In Ref. 3; AAV68822." evidence="3" ref="3">
    <original>T</original>
    <variation>A</variation>
    <location>
        <position position="41"/>
    </location>
</feature>
<name>TET16_ARATH</name>
<reference key="1">
    <citation type="journal article" date="2000" name="Nature">
        <title>Sequence and analysis of chromosome 1 of the plant Arabidopsis thaliana.</title>
        <authorList>
            <person name="Theologis A."/>
            <person name="Ecker J.R."/>
            <person name="Palm C.J."/>
            <person name="Federspiel N.A."/>
            <person name="Kaul S."/>
            <person name="White O."/>
            <person name="Alonso J."/>
            <person name="Altafi H."/>
            <person name="Araujo R."/>
            <person name="Bowman C.L."/>
            <person name="Brooks S.Y."/>
            <person name="Buehler E."/>
            <person name="Chan A."/>
            <person name="Chao Q."/>
            <person name="Chen H."/>
            <person name="Cheuk R.F."/>
            <person name="Chin C.W."/>
            <person name="Chung M.K."/>
            <person name="Conn L."/>
            <person name="Conway A.B."/>
            <person name="Conway A.R."/>
            <person name="Creasy T.H."/>
            <person name="Dewar K."/>
            <person name="Dunn P."/>
            <person name="Etgu P."/>
            <person name="Feldblyum T.V."/>
            <person name="Feng J.-D."/>
            <person name="Fong B."/>
            <person name="Fujii C.Y."/>
            <person name="Gill J.E."/>
            <person name="Goldsmith A.D."/>
            <person name="Haas B."/>
            <person name="Hansen N.F."/>
            <person name="Hughes B."/>
            <person name="Huizar L."/>
            <person name="Hunter J.L."/>
            <person name="Jenkins J."/>
            <person name="Johnson-Hopson C."/>
            <person name="Khan S."/>
            <person name="Khaykin E."/>
            <person name="Kim C.J."/>
            <person name="Koo H.L."/>
            <person name="Kremenetskaia I."/>
            <person name="Kurtz D.B."/>
            <person name="Kwan A."/>
            <person name="Lam B."/>
            <person name="Langin-Hooper S."/>
            <person name="Lee A."/>
            <person name="Lee J.M."/>
            <person name="Lenz C.A."/>
            <person name="Li J.H."/>
            <person name="Li Y.-P."/>
            <person name="Lin X."/>
            <person name="Liu S.X."/>
            <person name="Liu Z.A."/>
            <person name="Luros J.S."/>
            <person name="Maiti R."/>
            <person name="Marziali A."/>
            <person name="Militscher J."/>
            <person name="Miranda M."/>
            <person name="Nguyen M."/>
            <person name="Nierman W.C."/>
            <person name="Osborne B.I."/>
            <person name="Pai G."/>
            <person name="Peterson J."/>
            <person name="Pham P.K."/>
            <person name="Rizzo M."/>
            <person name="Rooney T."/>
            <person name="Rowley D."/>
            <person name="Sakano H."/>
            <person name="Salzberg S.L."/>
            <person name="Schwartz J.R."/>
            <person name="Shinn P."/>
            <person name="Southwick A.M."/>
            <person name="Sun H."/>
            <person name="Tallon L.J."/>
            <person name="Tambunga G."/>
            <person name="Toriumi M.J."/>
            <person name="Town C.D."/>
            <person name="Utterback T."/>
            <person name="Van Aken S."/>
            <person name="Vaysberg M."/>
            <person name="Vysotskaia V.S."/>
            <person name="Walker M."/>
            <person name="Wu D."/>
            <person name="Yu G."/>
            <person name="Fraser C.M."/>
            <person name="Venter J.C."/>
            <person name="Davis R.W."/>
        </authorList>
    </citation>
    <scope>NUCLEOTIDE SEQUENCE [LARGE SCALE GENOMIC DNA]</scope>
    <source>
        <strain>cv. Columbia</strain>
    </source>
</reference>
<reference key="2">
    <citation type="journal article" date="2017" name="Plant J.">
        <title>Araport11: a complete reannotation of the Arabidopsis thaliana reference genome.</title>
        <authorList>
            <person name="Cheng C.Y."/>
            <person name="Krishnakumar V."/>
            <person name="Chan A.P."/>
            <person name="Thibaud-Nissen F."/>
            <person name="Schobel S."/>
            <person name="Town C.D."/>
        </authorList>
    </citation>
    <scope>GENOME REANNOTATION</scope>
    <source>
        <strain>cv. Columbia</strain>
    </source>
</reference>
<reference key="3">
    <citation type="submission" date="2005-02" db="EMBL/GenBank/DDBJ databases">
        <authorList>
            <person name="Underwood B.A."/>
            <person name="Xiao Y.-L."/>
            <person name="Moskal W.A. Jr."/>
            <person name="Monaghan E.L."/>
            <person name="Wang W."/>
            <person name="Redman J.C."/>
            <person name="Wu H.C."/>
            <person name="Utterback T."/>
            <person name="Town C.D."/>
        </authorList>
    </citation>
    <scope>NUCLEOTIDE SEQUENCE [LARGE SCALE MRNA]</scope>
    <source>
        <strain>cv. Columbia</strain>
    </source>
</reference>
<reference key="4">
    <citation type="submission" date="2005-07" db="EMBL/GenBank/DDBJ databases">
        <title>Reconstruction of cDNA sequences for hypothetical genes in Arabidopsis thaliana from 5' and 3' RACE products.</title>
        <authorList>
            <person name="Xiao Y.-L."/>
            <person name="Underwood B.A."/>
            <person name="Moskal W.A. Jr."/>
            <person name="Torian U."/>
            <person name="Redman J.C."/>
            <person name="Wu H.C."/>
            <person name="Utterback T."/>
            <person name="Town C.D."/>
        </authorList>
    </citation>
    <scope>NUCLEOTIDE SEQUENCE [LARGE SCALE MRNA]</scope>
    <source>
        <strain>cv. Columbia</strain>
    </source>
</reference>
<proteinExistence type="evidence at transcript level"/>
<dbReference type="EMBL" id="AC013354">
    <property type="protein sequence ID" value="AAF26003.1"/>
    <property type="status" value="ALT_SEQ"/>
    <property type="molecule type" value="Genomic_DNA"/>
</dbReference>
<dbReference type="EMBL" id="CP002684">
    <property type="protein sequence ID" value="AEE29724.2"/>
    <property type="molecule type" value="Genomic_DNA"/>
</dbReference>
<dbReference type="EMBL" id="AY924674">
    <property type="protein sequence ID" value="AAX23749.1"/>
    <property type="molecule type" value="mRNA"/>
</dbReference>
<dbReference type="EMBL" id="AY800586">
    <property type="protein sequence ID" value="AAV68822.1"/>
    <property type="molecule type" value="mRNA"/>
</dbReference>
<dbReference type="PIR" id="F86318">
    <property type="entry name" value="F86318"/>
</dbReference>
<dbReference type="RefSeq" id="NP_173286.2">
    <property type="nucleotide sequence ID" value="NM_101709.2"/>
</dbReference>
<dbReference type="STRING" id="3702.Q5BQ04"/>
<dbReference type="TCDB" id="8.A.40.4.3">
    <property type="family name" value="the tetraspanin (tetraspanin) family"/>
</dbReference>
<dbReference type="GlyCosmos" id="Q5BQ04">
    <property type="glycosylation" value="2 sites, No reported glycans"/>
</dbReference>
<dbReference type="GlyGen" id="Q5BQ04">
    <property type="glycosylation" value="2 sites"/>
</dbReference>
<dbReference type="PaxDb" id="3702-AT1G18510.1"/>
<dbReference type="EnsemblPlants" id="AT1G18510.1">
    <property type="protein sequence ID" value="AT1G18510.1"/>
    <property type="gene ID" value="AT1G18510"/>
</dbReference>
<dbReference type="GeneID" id="838432"/>
<dbReference type="Gramene" id="AT1G18510.1">
    <property type="protein sequence ID" value="AT1G18510.1"/>
    <property type="gene ID" value="AT1G18510"/>
</dbReference>
<dbReference type="KEGG" id="ath:AT1G18510"/>
<dbReference type="Araport" id="AT1G18510"/>
<dbReference type="TAIR" id="AT1G18510">
    <property type="gene designation" value="TET16"/>
</dbReference>
<dbReference type="HOGENOM" id="CLU_1121427_0_0_1"/>
<dbReference type="InParanoid" id="Q5BQ04"/>
<dbReference type="OMA" id="WRYCCAQ"/>
<dbReference type="PhylomeDB" id="Q5BQ04"/>
<dbReference type="PRO" id="PR:Q5BQ04"/>
<dbReference type="Proteomes" id="UP000006548">
    <property type="component" value="Chromosome 1"/>
</dbReference>
<dbReference type="ExpressionAtlas" id="Q5BQ04">
    <property type="expression patterns" value="baseline and differential"/>
</dbReference>
<dbReference type="GO" id="GO:0016020">
    <property type="term" value="C:membrane"/>
    <property type="evidence" value="ECO:0007669"/>
    <property type="project" value="UniProtKB-SubCell"/>
</dbReference>
<dbReference type="GO" id="GO:0009734">
    <property type="term" value="P:auxin-activated signaling pathway"/>
    <property type="evidence" value="ECO:0007669"/>
    <property type="project" value="InterPro"/>
</dbReference>
<dbReference type="InterPro" id="IPR044991">
    <property type="entry name" value="TET_plant"/>
</dbReference>
<dbReference type="InterPro" id="IPR018499">
    <property type="entry name" value="Tetraspanin/Peripherin"/>
</dbReference>
<dbReference type="PANTHER" id="PTHR32191">
    <property type="entry name" value="TETRASPANIN-8-RELATED"/>
    <property type="match status" value="1"/>
</dbReference>
<dbReference type="Pfam" id="PF00335">
    <property type="entry name" value="Tetraspanin"/>
    <property type="match status" value="1"/>
</dbReference>
<comment type="function">
    <text evidence="1">May be involved in the regulation of cell differentiation.</text>
</comment>
<comment type="subcellular location">
    <subcellularLocation>
        <location evidence="1">Membrane</location>
        <topology evidence="3">Multi-pass membrane protein</topology>
    </subcellularLocation>
</comment>
<comment type="similarity">
    <text evidence="3">Belongs to the tetraspanin (TM4SF) family.</text>
</comment>
<comment type="sequence caution" evidence="3">
    <conflict type="erroneous gene model prediction">
        <sequence resource="EMBL-CDS" id="AAF26003"/>
    </conflict>
</comment>
<accession>Q5BQ04</accession>
<accession>F4IC96</accession>
<accession>Q5Q0G5</accession>
<accession>Q9LPR5</accession>
<gene>
    <name type="primary">TET16</name>
    <name type="ordered locus">At1g18510</name>
    <name type="ORF">F15H18.2</name>
</gene>